<sequence>MKFIDEAKIEVAAGKGGNGATSFRREKFVPRGGPDGGDGGKGGSVWAEADENTNTLVEYRFVKRYQAKNGEKGHGSDRYGAGADDIVLKMPVGTLIRDLDTDEIVADLTYHGQRVCLAKGGKGGLGNIHFKSSVNRAPKQSTPGEEGETRSLQLELKVLADVGLLGMPNAGKSTLITAVSAARPKIANYPFTTLHPNLGVVRIDENHSFVMADIPGLIEGAAEGAGLGHRFLKHLSRTGLLLHVVDLAPFDETVNPAEEALAIINELRKYDEELYGKPRWLVLNKLDMLDEEEARARTAAFLEAVGWDYPEPDDRFQFDMETPRLFQISALTHQGTQELVHQINQYLAEKKRIEAEKAEAEKAAANVEIIEQQPKTDTGVFKPE</sequence>
<protein>
    <recommendedName>
        <fullName evidence="1">GTPase Obg</fullName>
        <ecNumber evidence="1">3.6.5.-</ecNumber>
    </recommendedName>
    <alternativeName>
        <fullName evidence="1">GTP-binding protein Obg</fullName>
    </alternativeName>
</protein>
<comment type="function">
    <text evidence="1">An essential GTPase which binds GTP, GDP and possibly (p)ppGpp with moderate affinity, with high nucleotide exchange rates and a fairly low GTP hydrolysis rate. Plays a role in control of the cell cycle, stress response, ribosome biogenesis and in those bacteria that undergo differentiation, in morphogenesis control.</text>
</comment>
<comment type="cofactor">
    <cofactor evidence="1">
        <name>Mg(2+)</name>
        <dbReference type="ChEBI" id="CHEBI:18420"/>
    </cofactor>
</comment>
<comment type="subunit">
    <text evidence="1">Monomer.</text>
</comment>
<comment type="subcellular location">
    <subcellularLocation>
        <location evidence="1">Cytoplasm</location>
    </subcellularLocation>
</comment>
<comment type="similarity">
    <text evidence="1">Belongs to the TRAFAC class OBG-HflX-like GTPase superfamily. OBG GTPase family.</text>
</comment>
<accession>B4RQP4</accession>
<keyword id="KW-0963">Cytoplasm</keyword>
<keyword id="KW-0342">GTP-binding</keyword>
<keyword id="KW-0378">Hydrolase</keyword>
<keyword id="KW-0460">Magnesium</keyword>
<keyword id="KW-0479">Metal-binding</keyword>
<keyword id="KW-0547">Nucleotide-binding</keyword>
<reference key="1">
    <citation type="journal article" date="2008" name="J. Bacteriol.">
        <title>Complete genome sequence of Neisseria gonorrhoeae NCCP11945.</title>
        <authorList>
            <person name="Chung G.T."/>
            <person name="Yoo J.S."/>
            <person name="Oh H.B."/>
            <person name="Lee Y.S."/>
            <person name="Cha S.H."/>
            <person name="Kim S.J."/>
            <person name="Yoo C.K."/>
        </authorList>
    </citation>
    <scope>NUCLEOTIDE SEQUENCE [LARGE SCALE GENOMIC DNA]</scope>
    <source>
        <strain>NCCP11945</strain>
    </source>
</reference>
<gene>
    <name evidence="1" type="primary">obg</name>
    <name type="ordered locus">NGK_2250</name>
</gene>
<name>OBG_NEIG2</name>
<organism>
    <name type="scientific">Neisseria gonorrhoeae (strain NCCP11945)</name>
    <dbReference type="NCBI Taxonomy" id="521006"/>
    <lineage>
        <taxon>Bacteria</taxon>
        <taxon>Pseudomonadati</taxon>
        <taxon>Pseudomonadota</taxon>
        <taxon>Betaproteobacteria</taxon>
        <taxon>Neisseriales</taxon>
        <taxon>Neisseriaceae</taxon>
        <taxon>Neisseria</taxon>
    </lineage>
</organism>
<feature type="chain" id="PRO_0000386082" description="GTPase Obg">
    <location>
        <begin position="1"/>
        <end position="384"/>
    </location>
</feature>
<feature type="domain" description="Obg" evidence="2">
    <location>
        <begin position="1"/>
        <end position="159"/>
    </location>
</feature>
<feature type="domain" description="OBG-type G" evidence="1">
    <location>
        <begin position="160"/>
        <end position="348"/>
    </location>
</feature>
<feature type="region of interest" description="Disordered" evidence="3">
    <location>
        <begin position="20"/>
        <end position="46"/>
    </location>
</feature>
<feature type="region of interest" description="Disordered" evidence="3">
    <location>
        <begin position="129"/>
        <end position="149"/>
    </location>
</feature>
<feature type="compositionally biased region" description="Gly residues" evidence="3">
    <location>
        <begin position="33"/>
        <end position="43"/>
    </location>
</feature>
<feature type="compositionally biased region" description="Polar residues" evidence="3">
    <location>
        <begin position="130"/>
        <end position="143"/>
    </location>
</feature>
<feature type="binding site" evidence="1">
    <location>
        <begin position="166"/>
        <end position="173"/>
    </location>
    <ligand>
        <name>GTP</name>
        <dbReference type="ChEBI" id="CHEBI:37565"/>
    </ligand>
</feature>
<feature type="binding site" evidence="1">
    <location>
        <position position="173"/>
    </location>
    <ligand>
        <name>Mg(2+)</name>
        <dbReference type="ChEBI" id="CHEBI:18420"/>
    </ligand>
</feature>
<feature type="binding site" evidence="1">
    <location>
        <begin position="191"/>
        <end position="195"/>
    </location>
    <ligand>
        <name>GTP</name>
        <dbReference type="ChEBI" id="CHEBI:37565"/>
    </ligand>
</feature>
<feature type="binding site" evidence="1">
    <location>
        <position position="193"/>
    </location>
    <ligand>
        <name>Mg(2+)</name>
        <dbReference type="ChEBI" id="CHEBI:18420"/>
    </ligand>
</feature>
<feature type="binding site" evidence="1">
    <location>
        <begin position="213"/>
        <end position="216"/>
    </location>
    <ligand>
        <name>GTP</name>
        <dbReference type="ChEBI" id="CHEBI:37565"/>
    </ligand>
</feature>
<feature type="binding site" evidence="1">
    <location>
        <begin position="284"/>
        <end position="287"/>
    </location>
    <ligand>
        <name>GTP</name>
        <dbReference type="ChEBI" id="CHEBI:37565"/>
    </ligand>
</feature>
<feature type="binding site" evidence="1">
    <location>
        <begin position="329"/>
        <end position="331"/>
    </location>
    <ligand>
        <name>GTP</name>
        <dbReference type="ChEBI" id="CHEBI:37565"/>
    </ligand>
</feature>
<dbReference type="EC" id="3.6.5.-" evidence="1"/>
<dbReference type="EMBL" id="CP001050">
    <property type="protein sequence ID" value="ACF30854.1"/>
    <property type="molecule type" value="Genomic_DNA"/>
</dbReference>
<dbReference type="SMR" id="B4RQP4"/>
<dbReference type="KEGG" id="ngk:NGK_2250"/>
<dbReference type="HOGENOM" id="CLU_011747_2_0_4"/>
<dbReference type="Proteomes" id="UP000002564">
    <property type="component" value="Chromosome"/>
</dbReference>
<dbReference type="GO" id="GO:0005737">
    <property type="term" value="C:cytoplasm"/>
    <property type="evidence" value="ECO:0007669"/>
    <property type="project" value="UniProtKB-SubCell"/>
</dbReference>
<dbReference type="GO" id="GO:0005525">
    <property type="term" value="F:GTP binding"/>
    <property type="evidence" value="ECO:0007669"/>
    <property type="project" value="UniProtKB-UniRule"/>
</dbReference>
<dbReference type="GO" id="GO:0003924">
    <property type="term" value="F:GTPase activity"/>
    <property type="evidence" value="ECO:0007669"/>
    <property type="project" value="UniProtKB-UniRule"/>
</dbReference>
<dbReference type="GO" id="GO:0000287">
    <property type="term" value="F:magnesium ion binding"/>
    <property type="evidence" value="ECO:0007669"/>
    <property type="project" value="InterPro"/>
</dbReference>
<dbReference type="GO" id="GO:0042254">
    <property type="term" value="P:ribosome biogenesis"/>
    <property type="evidence" value="ECO:0007669"/>
    <property type="project" value="UniProtKB-UniRule"/>
</dbReference>
<dbReference type="CDD" id="cd01898">
    <property type="entry name" value="Obg"/>
    <property type="match status" value="1"/>
</dbReference>
<dbReference type="FunFam" id="2.70.210.12:FF:000001">
    <property type="entry name" value="GTPase Obg"/>
    <property type="match status" value="1"/>
</dbReference>
<dbReference type="FunFam" id="3.40.50.300:FF:000185">
    <property type="entry name" value="GTPase Obg"/>
    <property type="match status" value="1"/>
</dbReference>
<dbReference type="Gene3D" id="2.70.210.12">
    <property type="entry name" value="GTP1/OBG domain"/>
    <property type="match status" value="1"/>
</dbReference>
<dbReference type="Gene3D" id="3.40.50.300">
    <property type="entry name" value="P-loop containing nucleotide triphosphate hydrolases"/>
    <property type="match status" value="1"/>
</dbReference>
<dbReference type="HAMAP" id="MF_01454">
    <property type="entry name" value="GTPase_Obg"/>
    <property type="match status" value="1"/>
</dbReference>
<dbReference type="InterPro" id="IPR031167">
    <property type="entry name" value="G_OBG"/>
</dbReference>
<dbReference type="InterPro" id="IPR006073">
    <property type="entry name" value="GTP-bd"/>
</dbReference>
<dbReference type="InterPro" id="IPR014100">
    <property type="entry name" value="GTP-bd_Obg/CgtA"/>
</dbReference>
<dbReference type="InterPro" id="IPR006074">
    <property type="entry name" value="GTP1-OBG_CS"/>
</dbReference>
<dbReference type="InterPro" id="IPR006169">
    <property type="entry name" value="GTP1_OBG_dom"/>
</dbReference>
<dbReference type="InterPro" id="IPR036726">
    <property type="entry name" value="GTP1_OBG_dom_sf"/>
</dbReference>
<dbReference type="InterPro" id="IPR045086">
    <property type="entry name" value="OBG_GTPase"/>
</dbReference>
<dbReference type="InterPro" id="IPR027417">
    <property type="entry name" value="P-loop_NTPase"/>
</dbReference>
<dbReference type="NCBIfam" id="TIGR02729">
    <property type="entry name" value="Obg_CgtA"/>
    <property type="match status" value="1"/>
</dbReference>
<dbReference type="NCBIfam" id="NF008955">
    <property type="entry name" value="PRK12297.1"/>
    <property type="match status" value="1"/>
</dbReference>
<dbReference type="NCBIfam" id="NF008956">
    <property type="entry name" value="PRK12299.1"/>
    <property type="match status" value="1"/>
</dbReference>
<dbReference type="PANTHER" id="PTHR11702">
    <property type="entry name" value="DEVELOPMENTALLY REGULATED GTP-BINDING PROTEIN-RELATED"/>
    <property type="match status" value="1"/>
</dbReference>
<dbReference type="PANTHER" id="PTHR11702:SF31">
    <property type="entry name" value="MITOCHONDRIAL RIBOSOME-ASSOCIATED GTPASE 2"/>
    <property type="match status" value="1"/>
</dbReference>
<dbReference type="Pfam" id="PF01018">
    <property type="entry name" value="GTP1_OBG"/>
    <property type="match status" value="1"/>
</dbReference>
<dbReference type="Pfam" id="PF01926">
    <property type="entry name" value="MMR_HSR1"/>
    <property type="match status" value="1"/>
</dbReference>
<dbReference type="PIRSF" id="PIRSF002401">
    <property type="entry name" value="GTP_bd_Obg/CgtA"/>
    <property type="match status" value="1"/>
</dbReference>
<dbReference type="PRINTS" id="PR00326">
    <property type="entry name" value="GTP1OBG"/>
</dbReference>
<dbReference type="SUPFAM" id="SSF82051">
    <property type="entry name" value="Obg GTP-binding protein N-terminal domain"/>
    <property type="match status" value="1"/>
</dbReference>
<dbReference type="SUPFAM" id="SSF52540">
    <property type="entry name" value="P-loop containing nucleoside triphosphate hydrolases"/>
    <property type="match status" value="1"/>
</dbReference>
<dbReference type="PROSITE" id="PS51710">
    <property type="entry name" value="G_OBG"/>
    <property type="match status" value="1"/>
</dbReference>
<dbReference type="PROSITE" id="PS00905">
    <property type="entry name" value="GTP1_OBG"/>
    <property type="match status" value="1"/>
</dbReference>
<dbReference type="PROSITE" id="PS51883">
    <property type="entry name" value="OBG"/>
    <property type="match status" value="1"/>
</dbReference>
<evidence type="ECO:0000255" key="1">
    <source>
        <dbReference type="HAMAP-Rule" id="MF_01454"/>
    </source>
</evidence>
<evidence type="ECO:0000255" key="2">
    <source>
        <dbReference type="PROSITE-ProRule" id="PRU01231"/>
    </source>
</evidence>
<evidence type="ECO:0000256" key="3">
    <source>
        <dbReference type="SAM" id="MobiDB-lite"/>
    </source>
</evidence>
<proteinExistence type="inferred from homology"/>